<comment type="function">
    <text evidence="1">Required for accurate and efficient protein synthesis under certain stress conditions. May act as a fidelity factor of the translation reaction, by catalyzing a one-codon backward translocation of tRNAs on improperly translocated ribosomes. Back-translocation proceeds from a post-translocation (POST) complex to a pre-translocation (PRE) complex, thus giving elongation factor G a second chance to translocate the tRNAs correctly. Binds to ribosomes in a GTP-dependent manner.</text>
</comment>
<comment type="catalytic activity">
    <reaction evidence="1">
        <text>GTP + H2O = GDP + phosphate + H(+)</text>
        <dbReference type="Rhea" id="RHEA:19669"/>
        <dbReference type="ChEBI" id="CHEBI:15377"/>
        <dbReference type="ChEBI" id="CHEBI:15378"/>
        <dbReference type="ChEBI" id="CHEBI:37565"/>
        <dbReference type="ChEBI" id="CHEBI:43474"/>
        <dbReference type="ChEBI" id="CHEBI:58189"/>
        <dbReference type="EC" id="3.6.5.n1"/>
    </reaction>
</comment>
<comment type="subcellular location">
    <subcellularLocation>
        <location evidence="1">Cell inner membrane</location>
        <topology evidence="1">Peripheral membrane protein</topology>
        <orientation evidence="1">Cytoplasmic side</orientation>
    </subcellularLocation>
</comment>
<comment type="similarity">
    <text evidence="1">Belongs to the TRAFAC class translation factor GTPase superfamily. Classic translation factor GTPase family. LepA subfamily.</text>
</comment>
<name>LEPA_RHIEC</name>
<gene>
    <name evidence="1" type="primary">lepA</name>
    <name type="ordered locus">RHE_CH00248</name>
</gene>
<proteinExistence type="inferred from homology"/>
<feature type="chain" id="PRO_0000265689" description="Elongation factor 4">
    <location>
        <begin position="1"/>
        <end position="610"/>
    </location>
</feature>
<feature type="domain" description="tr-type G">
    <location>
        <begin position="13"/>
        <end position="195"/>
    </location>
</feature>
<feature type="binding site" evidence="1">
    <location>
        <begin position="25"/>
        <end position="30"/>
    </location>
    <ligand>
        <name>GTP</name>
        <dbReference type="ChEBI" id="CHEBI:37565"/>
    </ligand>
</feature>
<feature type="binding site" evidence="1">
    <location>
        <begin position="142"/>
        <end position="145"/>
    </location>
    <ligand>
        <name>GTP</name>
        <dbReference type="ChEBI" id="CHEBI:37565"/>
    </ligand>
</feature>
<sequence length="610" mass="67339">MARMSTNSTTPLSHIRNFSIVAHIDHGKSTLADRLIQTTGGLAEREMSEQVLDNMEIERERGITIKAQTVRLHYQANNGEKYVLNLIDTPGHVDFAYEVSRSLSACEGSLLVVDASQGVEAQTLANVYQAIDNNHELVTVLNKIDLPAAEPDRIKEQIEEVIGIDASEAVLISAKTGLGIPDVLEAIVHKLPAPKSAGGEKAPLKALLVDSWYDTYLGVMVLVRIIDGVLTKGQTIRMMGTDAKYQVERVGVLTPKMVNVDSLGPGEIGFITASIKEVADTRVGDTITEDKRPTAEALPGFKPAQPVVFCGLFPVDAADFEDLRAAMGKLRLNDASFSFEMESSAALGFGFRCGFLGLLHLEIIQERLEREFDLDLIATAPSVVYQLTMTDGSERELHNPADMPDVVKIAEIREPWIKATIMTPDDYLGGILKLCQDRRGIQTELTYVGTRAMVTYELPLNEVVFDFYDRLKSISKGYASFDYHLEGYRAGNLVKMSILVNGEPVDALSMLVHRTAAEKRGRDMCERLKELIPKHMFKIPIQAAIGGNVIARETISALRKDVTAKCYGGDATRKRKLLDKQKEGKKRMRQFGKVEIPQEAFIAALKMGDE</sequence>
<reference key="1">
    <citation type="journal article" date="2006" name="Proc. Natl. Acad. Sci. U.S.A.">
        <title>The partitioned Rhizobium etli genome: genetic and metabolic redundancy in seven interacting replicons.</title>
        <authorList>
            <person name="Gonzalez V."/>
            <person name="Santamaria R.I."/>
            <person name="Bustos P."/>
            <person name="Hernandez-Gonzalez I."/>
            <person name="Medrano-Soto A."/>
            <person name="Moreno-Hagelsieb G."/>
            <person name="Janga S.C."/>
            <person name="Ramirez M.A."/>
            <person name="Jimenez-Jacinto V."/>
            <person name="Collado-Vides J."/>
            <person name="Davila G."/>
        </authorList>
    </citation>
    <scope>NUCLEOTIDE SEQUENCE [LARGE SCALE GENOMIC DNA]</scope>
    <source>
        <strain>ATCC 51251 / DSM 11541 / JCM 21823 / NBRC 15573 / CFN 42</strain>
    </source>
</reference>
<keyword id="KW-0997">Cell inner membrane</keyword>
<keyword id="KW-1003">Cell membrane</keyword>
<keyword id="KW-0342">GTP-binding</keyword>
<keyword id="KW-0378">Hydrolase</keyword>
<keyword id="KW-0472">Membrane</keyword>
<keyword id="KW-0547">Nucleotide-binding</keyword>
<keyword id="KW-0648">Protein biosynthesis</keyword>
<keyword id="KW-1185">Reference proteome</keyword>
<dbReference type="EC" id="3.6.5.n1" evidence="1"/>
<dbReference type="EMBL" id="CP000133">
    <property type="protein sequence ID" value="ABC89071.1"/>
    <property type="molecule type" value="Genomic_DNA"/>
</dbReference>
<dbReference type="RefSeq" id="WP_011423633.1">
    <property type="nucleotide sequence ID" value="NC_007761.1"/>
</dbReference>
<dbReference type="SMR" id="Q2KDL5"/>
<dbReference type="KEGG" id="ret:RHE_CH00248"/>
<dbReference type="eggNOG" id="COG0481">
    <property type="taxonomic scope" value="Bacteria"/>
</dbReference>
<dbReference type="HOGENOM" id="CLU_009995_3_3_5"/>
<dbReference type="OrthoDB" id="9802948at2"/>
<dbReference type="Proteomes" id="UP000001936">
    <property type="component" value="Chromosome"/>
</dbReference>
<dbReference type="GO" id="GO:0005886">
    <property type="term" value="C:plasma membrane"/>
    <property type="evidence" value="ECO:0007669"/>
    <property type="project" value="UniProtKB-SubCell"/>
</dbReference>
<dbReference type="GO" id="GO:0005525">
    <property type="term" value="F:GTP binding"/>
    <property type="evidence" value="ECO:0007669"/>
    <property type="project" value="UniProtKB-UniRule"/>
</dbReference>
<dbReference type="GO" id="GO:0003924">
    <property type="term" value="F:GTPase activity"/>
    <property type="evidence" value="ECO:0007669"/>
    <property type="project" value="UniProtKB-UniRule"/>
</dbReference>
<dbReference type="GO" id="GO:0097216">
    <property type="term" value="F:guanosine tetraphosphate binding"/>
    <property type="evidence" value="ECO:0007669"/>
    <property type="project" value="UniProtKB-ARBA"/>
</dbReference>
<dbReference type="GO" id="GO:0043022">
    <property type="term" value="F:ribosome binding"/>
    <property type="evidence" value="ECO:0007669"/>
    <property type="project" value="UniProtKB-UniRule"/>
</dbReference>
<dbReference type="GO" id="GO:0003746">
    <property type="term" value="F:translation elongation factor activity"/>
    <property type="evidence" value="ECO:0007669"/>
    <property type="project" value="UniProtKB-UniRule"/>
</dbReference>
<dbReference type="GO" id="GO:0045727">
    <property type="term" value="P:positive regulation of translation"/>
    <property type="evidence" value="ECO:0007669"/>
    <property type="project" value="UniProtKB-UniRule"/>
</dbReference>
<dbReference type="CDD" id="cd03699">
    <property type="entry name" value="EF4_II"/>
    <property type="match status" value="1"/>
</dbReference>
<dbReference type="CDD" id="cd16260">
    <property type="entry name" value="EF4_III"/>
    <property type="match status" value="1"/>
</dbReference>
<dbReference type="CDD" id="cd01890">
    <property type="entry name" value="LepA"/>
    <property type="match status" value="1"/>
</dbReference>
<dbReference type="CDD" id="cd03709">
    <property type="entry name" value="lepA_C"/>
    <property type="match status" value="1"/>
</dbReference>
<dbReference type="FunFam" id="3.40.50.300:FF:000078">
    <property type="entry name" value="Elongation factor 4"/>
    <property type="match status" value="1"/>
</dbReference>
<dbReference type="FunFam" id="2.40.30.10:FF:000015">
    <property type="entry name" value="Translation factor GUF1, mitochondrial"/>
    <property type="match status" value="1"/>
</dbReference>
<dbReference type="FunFam" id="3.30.70.240:FF:000007">
    <property type="entry name" value="Translation factor GUF1, mitochondrial"/>
    <property type="match status" value="1"/>
</dbReference>
<dbReference type="FunFam" id="3.30.70.2570:FF:000001">
    <property type="entry name" value="Translation factor GUF1, mitochondrial"/>
    <property type="match status" value="1"/>
</dbReference>
<dbReference type="FunFam" id="3.30.70.870:FF:000004">
    <property type="entry name" value="Translation factor GUF1, mitochondrial"/>
    <property type="match status" value="1"/>
</dbReference>
<dbReference type="Gene3D" id="3.30.70.240">
    <property type="match status" value="1"/>
</dbReference>
<dbReference type="Gene3D" id="3.30.70.2570">
    <property type="entry name" value="Elongation factor 4, C-terminal domain"/>
    <property type="match status" value="1"/>
</dbReference>
<dbReference type="Gene3D" id="3.30.70.870">
    <property type="entry name" value="Elongation Factor G (Translational Gtpase), domain 3"/>
    <property type="match status" value="1"/>
</dbReference>
<dbReference type="Gene3D" id="3.40.50.300">
    <property type="entry name" value="P-loop containing nucleotide triphosphate hydrolases"/>
    <property type="match status" value="1"/>
</dbReference>
<dbReference type="Gene3D" id="2.40.30.10">
    <property type="entry name" value="Translation factors"/>
    <property type="match status" value="1"/>
</dbReference>
<dbReference type="HAMAP" id="MF_00071">
    <property type="entry name" value="LepA"/>
    <property type="match status" value="1"/>
</dbReference>
<dbReference type="InterPro" id="IPR006297">
    <property type="entry name" value="EF-4"/>
</dbReference>
<dbReference type="InterPro" id="IPR035647">
    <property type="entry name" value="EFG_III/V"/>
</dbReference>
<dbReference type="InterPro" id="IPR000640">
    <property type="entry name" value="EFG_V-like"/>
</dbReference>
<dbReference type="InterPro" id="IPR004161">
    <property type="entry name" value="EFTu-like_2"/>
</dbReference>
<dbReference type="InterPro" id="IPR031157">
    <property type="entry name" value="G_TR_CS"/>
</dbReference>
<dbReference type="InterPro" id="IPR038363">
    <property type="entry name" value="LepA_C_sf"/>
</dbReference>
<dbReference type="InterPro" id="IPR013842">
    <property type="entry name" value="LepA_CTD"/>
</dbReference>
<dbReference type="InterPro" id="IPR035654">
    <property type="entry name" value="LepA_IV"/>
</dbReference>
<dbReference type="InterPro" id="IPR027417">
    <property type="entry name" value="P-loop_NTPase"/>
</dbReference>
<dbReference type="InterPro" id="IPR005225">
    <property type="entry name" value="Small_GTP-bd"/>
</dbReference>
<dbReference type="InterPro" id="IPR000795">
    <property type="entry name" value="T_Tr_GTP-bd_dom"/>
</dbReference>
<dbReference type="NCBIfam" id="TIGR01393">
    <property type="entry name" value="lepA"/>
    <property type="match status" value="1"/>
</dbReference>
<dbReference type="NCBIfam" id="TIGR00231">
    <property type="entry name" value="small_GTP"/>
    <property type="match status" value="1"/>
</dbReference>
<dbReference type="PANTHER" id="PTHR43512:SF4">
    <property type="entry name" value="TRANSLATION FACTOR GUF1 HOMOLOG, CHLOROPLASTIC"/>
    <property type="match status" value="1"/>
</dbReference>
<dbReference type="PANTHER" id="PTHR43512">
    <property type="entry name" value="TRANSLATION FACTOR GUF1-RELATED"/>
    <property type="match status" value="1"/>
</dbReference>
<dbReference type="Pfam" id="PF00679">
    <property type="entry name" value="EFG_C"/>
    <property type="match status" value="1"/>
</dbReference>
<dbReference type="Pfam" id="PF00009">
    <property type="entry name" value="GTP_EFTU"/>
    <property type="match status" value="1"/>
</dbReference>
<dbReference type="Pfam" id="PF03144">
    <property type="entry name" value="GTP_EFTU_D2"/>
    <property type="match status" value="1"/>
</dbReference>
<dbReference type="Pfam" id="PF06421">
    <property type="entry name" value="LepA_C"/>
    <property type="match status" value="1"/>
</dbReference>
<dbReference type="PRINTS" id="PR00315">
    <property type="entry name" value="ELONGATNFCT"/>
</dbReference>
<dbReference type="SMART" id="SM00838">
    <property type="entry name" value="EFG_C"/>
    <property type="match status" value="1"/>
</dbReference>
<dbReference type="SUPFAM" id="SSF54980">
    <property type="entry name" value="EF-G C-terminal domain-like"/>
    <property type="match status" value="2"/>
</dbReference>
<dbReference type="SUPFAM" id="SSF52540">
    <property type="entry name" value="P-loop containing nucleoside triphosphate hydrolases"/>
    <property type="match status" value="1"/>
</dbReference>
<dbReference type="PROSITE" id="PS00301">
    <property type="entry name" value="G_TR_1"/>
    <property type="match status" value="1"/>
</dbReference>
<dbReference type="PROSITE" id="PS51722">
    <property type="entry name" value="G_TR_2"/>
    <property type="match status" value="1"/>
</dbReference>
<evidence type="ECO:0000255" key="1">
    <source>
        <dbReference type="HAMAP-Rule" id="MF_00071"/>
    </source>
</evidence>
<organism>
    <name type="scientific">Rhizobium etli (strain ATCC 51251 / DSM 11541 / JCM 21823 / NBRC 15573 / CFN 42)</name>
    <dbReference type="NCBI Taxonomy" id="347834"/>
    <lineage>
        <taxon>Bacteria</taxon>
        <taxon>Pseudomonadati</taxon>
        <taxon>Pseudomonadota</taxon>
        <taxon>Alphaproteobacteria</taxon>
        <taxon>Hyphomicrobiales</taxon>
        <taxon>Rhizobiaceae</taxon>
        <taxon>Rhizobium/Agrobacterium group</taxon>
        <taxon>Rhizobium</taxon>
    </lineage>
</organism>
<protein>
    <recommendedName>
        <fullName evidence="1">Elongation factor 4</fullName>
        <shortName evidence="1">EF-4</shortName>
        <ecNumber evidence="1">3.6.5.n1</ecNumber>
    </recommendedName>
    <alternativeName>
        <fullName evidence="1">Ribosomal back-translocase LepA</fullName>
    </alternativeName>
</protein>
<accession>Q2KDL5</accession>